<evidence type="ECO:0000255" key="1">
    <source>
        <dbReference type="HAMAP-Rule" id="MF_01693"/>
    </source>
</evidence>
<name>BIOF_THISH</name>
<accession>B8GTH6</accession>
<protein>
    <recommendedName>
        <fullName evidence="1">8-amino-7-oxononanoate synthase</fullName>
        <shortName evidence="1">AONS</shortName>
        <ecNumber evidence="1">2.3.1.47</ecNumber>
    </recommendedName>
    <alternativeName>
        <fullName evidence="1">7-keto-8-amino-pelargonic acid synthase</fullName>
        <shortName evidence="1">7-KAP synthase</shortName>
        <shortName evidence="1">KAPA synthase</shortName>
    </alternativeName>
    <alternativeName>
        <fullName evidence="1">8-amino-7-ketopelargonate synthase</fullName>
    </alternativeName>
</protein>
<gene>
    <name evidence="1" type="primary">bioF</name>
    <name type="ordered locus">Tgr7_0133</name>
</gene>
<dbReference type="EC" id="2.3.1.47" evidence="1"/>
<dbReference type="EMBL" id="CP001339">
    <property type="protein sequence ID" value="ACL71236.1"/>
    <property type="molecule type" value="Genomic_DNA"/>
</dbReference>
<dbReference type="RefSeq" id="WP_012636725.1">
    <property type="nucleotide sequence ID" value="NC_011901.1"/>
</dbReference>
<dbReference type="SMR" id="B8GTH6"/>
<dbReference type="STRING" id="396588.Tgr7_0133"/>
<dbReference type="KEGG" id="tgr:Tgr7_0133"/>
<dbReference type="eggNOG" id="COG0156">
    <property type="taxonomic scope" value="Bacteria"/>
</dbReference>
<dbReference type="HOGENOM" id="CLU_015846_11_0_6"/>
<dbReference type="OrthoDB" id="9807157at2"/>
<dbReference type="UniPathway" id="UPA00078"/>
<dbReference type="Proteomes" id="UP000002383">
    <property type="component" value="Chromosome"/>
</dbReference>
<dbReference type="GO" id="GO:0008710">
    <property type="term" value="F:8-amino-7-oxononanoate synthase activity"/>
    <property type="evidence" value="ECO:0007669"/>
    <property type="project" value="UniProtKB-UniRule"/>
</dbReference>
<dbReference type="GO" id="GO:0030170">
    <property type="term" value="F:pyridoxal phosphate binding"/>
    <property type="evidence" value="ECO:0007669"/>
    <property type="project" value="UniProtKB-UniRule"/>
</dbReference>
<dbReference type="GO" id="GO:0009102">
    <property type="term" value="P:biotin biosynthetic process"/>
    <property type="evidence" value="ECO:0007669"/>
    <property type="project" value="UniProtKB-UniRule"/>
</dbReference>
<dbReference type="CDD" id="cd06454">
    <property type="entry name" value="KBL_like"/>
    <property type="match status" value="1"/>
</dbReference>
<dbReference type="Gene3D" id="3.90.1150.10">
    <property type="entry name" value="Aspartate Aminotransferase, domain 1"/>
    <property type="match status" value="1"/>
</dbReference>
<dbReference type="Gene3D" id="3.40.640.10">
    <property type="entry name" value="Type I PLP-dependent aspartate aminotransferase-like (Major domain)"/>
    <property type="match status" value="1"/>
</dbReference>
<dbReference type="HAMAP" id="MF_01693">
    <property type="entry name" value="BioF_aminotrans_2"/>
    <property type="match status" value="1"/>
</dbReference>
<dbReference type="InterPro" id="IPR001917">
    <property type="entry name" value="Aminotrans_II_pyridoxalP_BS"/>
</dbReference>
<dbReference type="InterPro" id="IPR004839">
    <property type="entry name" value="Aminotransferase_I/II_large"/>
</dbReference>
<dbReference type="InterPro" id="IPR050087">
    <property type="entry name" value="AON_synthase_class-II"/>
</dbReference>
<dbReference type="InterPro" id="IPR004723">
    <property type="entry name" value="AONS_Archaea/Proteobacteria"/>
</dbReference>
<dbReference type="InterPro" id="IPR022834">
    <property type="entry name" value="AONS_Proteobacteria"/>
</dbReference>
<dbReference type="InterPro" id="IPR015424">
    <property type="entry name" value="PyrdxlP-dep_Trfase"/>
</dbReference>
<dbReference type="InterPro" id="IPR015421">
    <property type="entry name" value="PyrdxlP-dep_Trfase_major"/>
</dbReference>
<dbReference type="InterPro" id="IPR015422">
    <property type="entry name" value="PyrdxlP-dep_Trfase_small"/>
</dbReference>
<dbReference type="NCBIfam" id="TIGR00858">
    <property type="entry name" value="bioF"/>
    <property type="match status" value="1"/>
</dbReference>
<dbReference type="PANTHER" id="PTHR13693:SF100">
    <property type="entry name" value="8-AMINO-7-OXONONANOATE SYNTHASE"/>
    <property type="match status" value="1"/>
</dbReference>
<dbReference type="PANTHER" id="PTHR13693">
    <property type="entry name" value="CLASS II AMINOTRANSFERASE/8-AMINO-7-OXONONANOATE SYNTHASE"/>
    <property type="match status" value="1"/>
</dbReference>
<dbReference type="Pfam" id="PF00155">
    <property type="entry name" value="Aminotran_1_2"/>
    <property type="match status" value="1"/>
</dbReference>
<dbReference type="SUPFAM" id="SSF53383">
    <property type="entry name" value="PLP-dependent transferases"/>
    <property type="match status" value="1"/>
</dbReference>
<dbReference type="PROSITE" id="PS00599">
    <property type="entry name" value="AA_TRANSFER_CLASS_2"/>
    <property type="match status" value="1"/>
</dbReference>
<sequence length="392" mass="42151">MRDLKTELEQRRAKGLYRSRRVLEGRQTPEQVVDGRQVIAFCSNDYLGLASHPKVIAALRKGASEYGAGAGAAHLVNGHTRAHHQLEEELAAFTNRERALLFSTGYMANLGVAQALLGRSDHVLEDRLNHASLIDAGLLSGARFQRYRHATAVDLAQRLAGLGQTGERLVLTDGVFSMDGNLAPLPELASICTAHQAWLLVDDAHGLGVLGETGAGSLEHFGLSQQQVPILMGTLGKAFGTAGAFVAGSEALIETLIQSARTYVYTTAMPAAMAEATRAALRIVQAEGKRREKLRSLVARFRAGAGQLGVRLMDSQTPIQPLVIGDAVEALRLSERLLEQDLLVPAIRPPTVPEGTARLRVTLSAAHTEAQVDRLLEALDRSMRGSEDVGSR</sequence>
<proteinExistence type="inferred from homology"/>
<feature type="chain" id="PRO_0000381129" description="8-amino-7-oxononanoate synthase">
    <location>
        <begin position="1"/>
        <end position="392"/>
    </location>
</feature>
<feature type="binding site" evidence="1">
    <location>
        <position position="18"/>
    </location>
    <ligand>
        <name>substrate</name>
    </ligand>
</feature>
<feature type="binding site" evidence="1">
    <location>
        <begin position="105"/>
        <end position="106"/>
    </location>
    <ligand>
        <name>pyridoxal 5'-phosphate</name>
        <dbReference type="ChEBI" id="CHEBI:597326"/>
    </ligand>
</feature>
<feature type="binding site" evidence="1">
    <location>
        <position position="130"/>
    </location>
    <ligand>
        <name>substrate</name>
    </ligand>
</feature>
<feature type="binding site" evidence="1">
    <location>
        <position position="177"/>
    </location>
    <ligand>
        <name>pyridoxal 5'-phosphate</name>
        <dbReference type="ChEBI" id="CHEBI:597326"/>
    </ligand>
</feature>
<feature type="binding site" evidence="1">
    <location>
        <position position="205"/>
    </location>
    <ligand>
        <name>pyridoxal 5'-phosphate</name>
        <dbReference type="ChEBI" id="CHEBI:597326"/>
    </ligand>
</feature>
<feature type="binding site" evidence="1">
    <location>
        <position position="234"/>
    </location>
    <ligand>
        <name>pyridoxal 5'-phosphate</name>
        <dbReference type="ChEBI" id="CHEBI:597326"/>
    </ligand>
</feature>
<feature type="binding site" evidence="1">
    <location>
        <position position="351"/>
    </location>
    <ligand>
        <name>substrate</name>
    </ligand>
</feature>
<feature type="modified residue" description="N6-(pyridoxal phosphate)lysine" evidence="1">
    <location>
        <position position="237"/>
    </location>
</feature>
<keyword id="KW-0093">Biotin biosynthesis</keyword>
<keyword id="KW-0663">Pyridoxal phosphate</keyword>
<keyword id="KW-1185">Reference proteome</keyword>
<keyword id="KW-0808">Transferase</keyword>
<reference key="1">
    <citation type="journal article" date="2011" name="Stand. Genomic Sci.">
        <title>Complete genome sequence of 'Thioalkalivibrio sulfidophilus' HL-EbGr7.</title>
        <authorList>
            <person name="Muyzer G."/>
            <person name="Sorokin D.Y."/>
            <person name="Mavromatis K."/>
            <person name="Lapidus A."/>
            <person name="Clum A."/>
            <person name="Ivanova N."/>
            <person name="Pati A."/>
            <person name="d'Haeseleer P."/>
            <person name="Woyke T."/>
            <person name="Kyrpides N.C."/>
        </authorList>
    </citation>
    <scope>NUCLEOTIDE SEQUENCE [LARGE SCALE GENOMIC DNA]</scope>
    <source>
        <strain>HL-EbGR7</strain>
    </source>
</reference>
<comment type="function">
    <text evidence="1">Catalyzes the decarboxylative condensation of pimeloyl-[acyl-carrier protein] and L-alanine to produce 8-amino-7-oxononanoate (AON), [acyl-carrier protein], and carbon dioxide.</text>
</comment>
<comment type="catalytic activity">
    <reaction evidence="1">
        <text>6-carboxyhexanoyl-[ACP] + L-alanine + H(+) = (8S)-8-amino-7-oxononanoate + holo-[ACP] + CO2</text>
        <dbReference type="Rhea" id="RHEA:42288"/>
        <dbReference type="Rhea" id="RHEA-COMP:9685"/>
        <dbReference type="Rhea" id="RHEA-COMP:9955"/>
        <dbReference type="ChEBI" id="CHEBI:15378"/>
        <dbReference type="ChEBI" id="CHEBI:16526"/>
        <dbReference type="ChEBI" id="CHEBI:57972"/>
        <dbReference type="ChEBI" id="CHEBI:64479"/>
        <dbReference type="ChEBI" id="CHEBI:78846"/>
        <dbReference type="ChEBI" id="CHEBI:149468"/>
        <dbReference type="EC" id="2.3.1.47"/>
    </reaction>
</comment>
<comment type="cofactor">
    <cofactor evidence="1">
        <name>pyridoxal 5'-phosphate</name>
        <dbReference type="ChEBI" id="CHEBI:597326"/>
    </cofactor>
</comment>
<comment type="pathway">
    <text evidence="1">Cofactor biosynthesis; biotin biosynthesis.</text>
</comment>
<comment type="subunit">
    <text evidence="1">Homodimer.</text>
</comment>
<comment type="similarity">
    <text evidence="1">Belongs to the class-II pyridoxal-phosphate-dependent aminotransferase family. BioF subfamily.</text>
</comment>
<organism>
    <name type="scientific">Thioalkalivibrio sulfidiphilus (strain HL-EbGR7)</name>
    <dbReference type="NCBI Taxonomy" id="396588"/>
    <lineage>
        <taxon>Bacteria</taxon>
        <taxon>Pseudomonadati</taxon>
        <taxon>Pseudomonadota</taxon>
        <taxon>Gammaproteobacteria</taxon>
        <taxon>Chromatiales</taxon>
        <taxon>Ectothiorhodospiraceae</taxon>
        <taxon>Thioalkalivibrio</taxon>
    </lineage>
</organism>